<feature type="chain" id="PRO_0000208495" description="Innexin inx1">
    <location>
        <begin position="1"/>
        <end position="361"/>
    </location>
</feature>
<feature type="topological domain" description="Cytoplasmic" evidence="1">
    <location>
        <begin position="1"/>
        <end position="28"/>
    </location>
</feature>
<feature type="transmembrane region" description="Helical" evidence="2">
    <location>
        <begin position="29"/>
        <end position="49"/>
    </location>
</feature>
<feature type="topological domain" description="Extracellular" evidence="1">
    <location>
        <begin position="50"/>
        <end position="109"/>
    </location>
</feature>
<feature type="transmembrane region" description="Helical" evidence="2">
    <location>
        <begin position="110"/>
        <end position="130"/>
    </location>
</feature>
<feature type="topological domain" description="Cytoplasmic" evidence="1">
    <location>
        <begin position="131"/>
        <end position="181"/>
    </location>
</feature>
<feature type="transmembrane region" description="Helical" evidence="2">
    <location>
        <begin position="182"/>
        <end position="202"/>
    </location>
</feature>
<feature type="topological domain" description="Extracellular" evidence="1">
    <location>
        <begin position="203"/>
        <end position="267"/>
    </location>
</feature>
<feature type="transmembrane region" description="Helical" evidence="2">
    <location>
        <begin position="268"/>
        <end position="288"/>
    </location>
</feature>
<feature type="topological domain" description="Cytoplasmic" evidence="1">
    <location>
        <begin position="289"/>
        <end position="361"/>
    </location>
</feature>
<comment type="function">
    <text>Structural components of the gap junctions.</text>
</comment>
<comment type="subcellular location">
    <subcellularLocation>
        <location evidence="4">Cell membrane</location>
        <topology evidence="2">Multi-pass membrane protein</topology>
    </subcellularLocation>
    <subcellularLocation>
        <location>Cell junction</location>
        <location>Gap junction</location>
    </subcellularLocation>
</comment>
<comment type="tissue specificity">
    <text evidence="3">Expressed in embryonic neural precursors including the dorsal median neuroblast, glial cells, neuropilar glial ring, developing myoblasts cells and in a circumferential band of epithelial cells at the trochanter/coxa boundary stripe in the developing limb.</text>
</comment>
<comment type="developmental stage">
    <text>Embryonic development.</text>
</comment>
<comment type="similarity">
    <text evidence="2">Belongs to the pannexin family.</text>
</comment>
<reference key="1">
    <citation type="journal article" date="1999" name="Dev. Genet.">
        <title>Developmental expression and molecular characterization of two gap junction channel proteins expressed during embryogenesis in the grasshopper Schistocerca americana.</title>
        <authorList>
            <person name="Ganfornina M.D."/>
            <person name="Sanchez D."/>
            <person name="Herrera M."/>
            <person name="Bastiani M.J."/>
        </authorList>
    </citation>
    <scope>NUCLEOTIDE SEQUENCE [MRNA]</scope>
    <scope>CHARACTERIZATION</scope>
    <scope>TISSUE SPECIFICITY</scope>
    <source>
        <tissue>Body wall</tissue>
        <tissue>Embryo</tissue>
        <tissue>Ventral nerve cord</tissue>
    </source>
</reference>
<evidence type="ECO:0000255" key="1"/>
<evidence type="ECO:0000255" key="2">
    <source>
        <dbReference type="PROSITE-ProRule" id="PRU00351"/>
    </source>
</evidence>
<evidence type="ECO:0000269" key="3">
    <source>
    </source>
</evidence>
<evidence type="ECO:0000305" key="4"/>
<sequence>MYKLLGGLKEYLKWQDIVTDNAIFRLHNLFTTVLLLTCSLIITATQYVGNPIHCIVNGLPVRPINTYCWITSTFTMPDAFLRQVGSEVAHPGVANDFGDEDAKKYYTYYQWVCFVLFFQAMLCYTPKWIWDSIEGGLLRTLIMGLNRGLCQDDEKCMKKKALIEYLLRHIKRHNMYALKYWFCETLCLVNIIGQLYLMNHFFDGEFFSYGLRVVAFSEQSQEERVDPMVYVFPRVTKCTFHKYGASGSIQKHDSLCVLPLNIVNEKTYIFLWFWYIILAALLSVLVVYRAVILAVPSVRPILLHARNRMVPKEVTNAICRKTDVGDWWILYMLGRNMDPMIYGEVIADLAKKIETPSSNNP</sequence>
<dbReference type="EMBL" id="AF115853">
    <property type="protein sequence ID" value="AAD29305.1"/>
    <property type="molecule type" value="mRNA"/>
</dbReference>
<dbReference type="SMR" id="Q9XYN0"/>
<dbReference type="EnsemblMetazoa" id="XM_047128410.1">
    <property type="protein sequence ID" value="XP_046984366.1"/>
    <property type="gene ID" value="LOC124554761"/>
</dbReference>
<dbReference type="OrthoDB" id="5867527at2759"/>
<dbReference type="GO" id="GO:0005921">
    <property type="term" value="C:gap junction"/>
    <property type="evidence" value="ECO:0000314"/>
    <property type="project" value="UniProtKB"/>
</dbReference>
<dbReference type="GO" id="GO:0005886">
    <property type="term" value="C:plasma membrane"/>
    <property type="evidence" value="ECO:0000314"/>
    <property type="project" value="UniProtKB"/>
</dbReference>
<dbReference type="GO" id="GO:0005243">
    <property type="term" value="F:gap junction channel activity"/>
    <property type="evidence" value="ECO:0000304"/>
    <property type="project" value="UniProtKB"/>
</dbReference>
<dbReference type="GO" id="GO:0034220">
    <property type="term" value="P:monoatomic ion transmembrane transport"/>
    <property type="evidence" value="ECO:0007669"/>
    <property type="project" value="UniProtKB-KW"/>
</dbReference>
<dbReference type="InterPro" id="IPR000990">
    <property type="entry name" value="Innexin"/>
</dbReference>
<dbReference type="PANTHER" id="PTHR11893">
    <property type="entry name" value="INNEXIN"/>
    <property type="match status" value="1"/>
</dbReference>
<dbReference type="PANTHER" id="PTHR11893:SF39">
    <property type="entry name" value="INNEXIN INX1"/>
    <property type="match status" value="1"/>
</dbReference>
<dbReference type="Pfam" id="PF00876">
    <property type="entry name" value="Innexin"/>
    <property type="match status" value="1"/>
</dbReference>
<dbReference type="PRINTS" id="PR01262">
    <property type="entry name" value="INNEXIN"/>
</dbReference>
<dbReference type="PROSITE" id="PS51013">
    <property type="entry name" value="PANNEXIN"/>
    <property type="match status" value="1"/>
</dbReference>
<protein>
    <recommendedName>
        <fullName>Innexin inx1</fullName>
        <shortName>Innexin-1</shortName>
    </recommendedName>
    <alternativeName>
        <fullName>G-Inx1</fullName>
    </alternativeName>
</protein>
<name>INX1_SCHAM</name>
<accession>Q9XYN0</accession>
<organism>
    <name type="scientific">Schistocerca americana</name>
    <name type="common">American grasshopper</name>
    <dbReference type="NCBI Taxonomy" id="7009"/>
    <lineage>
        <taxon>Eukaryota</taxon>
        <taxon>Metazoa</taxon>
        <taxon>Ecdysozoa</taxon>
        <taxon>Arthropoda</taxon>
        <taxon>Hexapoda</taxon>
        <taxon>Insecta</taxon>
        <taxon>Pterygota</taxon>
        <taxon>Neoptera</taxon>
        <taxon>Polyneoptera</taxon>
        <taxon>Orthoptera</taxon>
        <taxon>Caelifera</taxon>
        <taxon>Acrididea</taxon>
        <taxon>Acridomorpha</taxon>
        <taxon>Acridoidea</taxon>
        <taxon>Acrididae</taxon>
        <taxon>Cyrtacanthacridinae</taxon>
        <taxon>Schistocerca</taxon>
    </lineage>
</organism>
<keyword id="KW-0965">Cell junction</keyword>
<keyword id="KW-1003">Cell membrane</keyword>
<keyword id="KW-0303">Gap junction</keyword>
<keyword id="KW-0407">Ion channel</keyword>
<keyword id="KW-0406">Ion transport</keyword>
<keyword id="KW-0472">Membrane</keyword>
<keyword id="KW-0812">Transmembrane</keyword>
<keyword id="KW-1133">Transmembrane helix</keyword>
<keyword id="KW-0813">Transport</keyword>
<gene>
    <name type="primary">inx1</name>
</gene>
<proteinExistence type="evidence at protein level"/>